<organism>
    <name type="scientific">Chlamydia caviae (strain ATCC VR-813 / DSM 19441 / 03DC25 / GPIC)</name>
    <name type="common">Chlamydophila caviae</name>
    <dbReference type="NCBI Taxonomy" id="227941"/>
    <lineage>
        <taxon>Bacteria</taxon>
        <taxon>Pseudomonadati</taxon>
        <taxon>Chlamydiota</taxon>
        <taxon>Chlamydiia</taxon>
        <taxon>Chlamydiales</taxon>
        <taxon>Chlamydiaceae</taxon>
        <taxon>Chlamydia/Chlamydophila group</taxon>
        <taxon>Chlamydia</taxon>
    </lineage>
</organism>
<proteinExistence type="inferred from homology"/>
<accession>Q821I9</accession>
<sequence>MSSRNPIQLLDTITINQIAAGEVIENSISVVKELVENALDAGADEIEVETLGGGQGLIVVKDNGCGMSSEDVALALKRHATSKIGEFSDVFSLSSFGFRGEALPAIASISKMEILSCPRAGEGSRTIIHGGEIVTSEAKPRQVGTTISIDSLFYNVPVRRGFQKSPQTDRMAMRKLLENRILSVENVGWSWVSERQQEFHIFKHQGFAERVAFVMGEGFMQEALRVDKGGNLVRVVGFLGSPGFHRPTRLGQRVFINDRPVDSTFISKKISEAYSMLLPPQRYPVFVLKLYLPPEWCDFNVHPQKTEVRILREEFVGEFLSETIGEVLARPQEVSVFETASTLPALRFFDEQLPESALEGLQGSNVLPVVKLTPSSSGSLPFLDREPDPLPVDRQTQISWGASQEVRFLTSLGKIVLAEDSEGVHAIFTESARKHLFYLSLVENHQHNYKSQSFLVPLCLEVTPQERIFLSSHIEEFKLLGIEISQMGPCVFSIESAPTFIGEEELKLWILSLAAESAKVDKRAMTLLIKEALTQTIFCKTLRAFDISWLSLLWQLGKPEKAFDGSQIRRLVLDEDFIKE</sequence>
<dbReference type="EMBL" id="AE015925">
    <property type="protein sequence ID" value="AAP05690.1"/>
    <property type="molecule type" value="Genomic_DNA"/>
</dbReference>
<dbReference type="RefSeq" id="WP_011006903.1">
    <property type="nucleotide sequence ID" value="NC_003361.3"/>
</dbReference>
<dbReference type="SMR" id="Q821I9"/>
<dbReference type="STRING" id="227941.CCA_00951"/>
<dbReference type="KEGG" id="cca:CCA_00951"/>
<dbReference type="eggNOG" id="COG0323">
    <property type="taxonomic scope" value="Bacteria"/>
</dbReference>
<dbReference type="HOGENOM" id="CLU_004131_4_3_0"/>
<dbReference type="OrthoDB" id="9763467at2"/>
<dbReference type="Proteomes" id="UP000002193">
    <property type="component" value="Chromosome"/>
</dbReference>
<dbReference type="GO" id="GO:0032300">
    <property type="term" value="C:mismatch repair complex"/>
    <property type="evidence" value="ECO:0007669"/>
    <property type="project" value="InterPro"/>
</dbReference>
<dbReference type="GO" id="GO:0005524">
    <property type="term" value="F:ATP binding"/>
    <property type="evidence" value="ECO:0007669"/>
    <property type="project" value="InterPro"/>
</dbReference>
<dbReference type="GO" id="GO:0016887">
    <property type="term" value="F:ATP hydrolysis activity"/>
    <property type="evidence" value="ECO:0007669"/>
    <property type="project" value="InterPro"/>
</dbReference>
<dbReference type="GO" id="GO:0140664">
    <property type="term" value="F:ATP-dependent DNA damage sensor activity"/>
    <property type="evidence" value="ECO:0007669"/>
    <property type="project" value="InterPro"/>
</dbReference>
<dbReference type="GO" id="GO:0030983">
    <property type="term" value="F:mismatched DNA binding"/>
    <property type="evidence" value="ECO:0007669"/>
    <property type="project" value="InterPro"/>
</dbReference>
<dbReference type="GO" id="GO:0006298">
    <property type="term" value="P:mismatch repair"/>
    <property type="evidence" value="ECO:0007669"/>
    <property type="project" value="UniProtKB-UniRule"/>
</dbReference>
<dbReference type="CDD" id="cd16926">
    <property type="entry name" value="HATPase_MutL-MLH-PMS-like"/>
    <property type="match status" value="1"/>
</dbReference>
<dbReference type="CDD" id="cd00782">
    <property type="entry name" value="MutL_Trans"/>
    <property type="match status" value="1"/>
</dbReference>
<dbReference type="FunFam" id="3.30.565.10:FF:000003">
    <property type="entry name" value="DNA mismatch repair endonuclease MutL"/>
    <property type="match status" value="1"/>
</dbReference>
<dbReference type="Gene3D" id="3.30.230.10">
    <property type="match status" value="1"/>
</dbReference>
<dbReference type="Gene3D" id="3.30.565.10">
    <property type="entry name" value="Histidine kinase-like ATPase, C-terminal domain"/>
    <property type="match status" value="1"/>
</dbReference>
<dbReference type="Gene3D" id="3.30.1370.100">
    <property type="entry name" value="MutL, C-terminal domain, regulatory subdomain"/>
    <property type="match status" value="1"/>
</dbReference>
<dbReference type="HAMAP" id="MF_00149">
    <property type="entry name" value="DNA_mis_repair"/>
    <property type="match status" value="1"/>
</dbReference>
<dbReference type="InterPro" id="IPR014762">
    <property type="entry name" value="DNA_mismatch_repair_CS"/>
</dbReference>
<dbReference type="InterPro" id="IPR020667">
    <property type="entry name" value="DNA_mismatch_repair_MutL"/>
</dbReference>
<dbReference type="InterPro" id="IPR013507">
    <property type="entry name" value="DNA_mismatch_S5_2-like"/>
</dbReference>
<dbReference type="InterPro" id="IPR036890">
    <property type="entry name" value="HATPase_C_sf"/>
</dbReference>
<dbReference type="InterPro" id="IPR002099">
    <property type="entry name" value="MutL/Mlh/PMS"/>
</dbReference>
<dbReference type="InterPro" id="IPR038973">
    <property type="entry name" value="MutL/Mlh/Pms-like"/>
</dbReference>
<dbReference type="InterPro" id="IPR014790">
    <property type="entry name" value="MutL_C"/>
</dbReference>
<dbReference type="InterPro" id="IPR042121">
    <property type="entry name" value="MutL_C_regsub"/>
</dbReference>
<dbReference type="InterPro" id="IPR037198">
    <property type="entry name" value="MutL_C_sf"/>
</dbReference>
<dbReference type="InterPro" id="IPR020568">
    <property type="entry name" value="Ribosomal_Su5_D2-typ_SF"/>
</dbReference>
<dbReference type="InterPro" id="IPR014721">
    <property type="entry name" value="Ribsml_uS5_D2-typ_fold_subgr"/>
</dbReference>
<dbReference type="NCBIfam" id="TIGR00585">
    <property type="entry name" value="mutl"/>
    <property type="match status" value="1"/>
</dbReference>
<dbReference type="NCBIfam" id="NF000954">
    <property type="entry name" value="PRK00095.2-5"/>
    <property type="match status" value="1"/>
</dbReference>
<dbReference type="PANTHER" id="PTHR10073">
    <property type="entry name" value="DNA MISMATCH REPAIR PROTEIN MLH, PMS, MUTL"/>
    <property type="match status" value="1"/>
</dbReference>
<dbReference type="PANTHER" id="PTHR10073:SF12">
    <property type="entry name" value="DNA MISMATCH REPAIR PROTEIN MLH1"/>
    <property type="match status" value="1"/>
</dbReference>
<dbReference type="Pfam" id="PF01119">
    <property type="entry name" value="DNA_mis_repair"/>
    <property type="match status" value="1"/>
</dbReference>
<dbReference type="Pfam" id="PF13589">
    <property type="entry name" value="HATPase_c_3"/>
    <property type="match status" value="1"/>
</dbReference>
<dbReference type="Pfam" id="PF08676">
    <property type="entry name" value="MutL_C"/>
    <property type="match status" value="1"/>
</dbReference>
<dbReference type="SMART" id="SM01340">
    <property type="entry name" value="DNA_mis_repair"/>
    <property type="match status" value="1"/>
</dbReference>
<dbReference type="SMART" id="SM00853">
    <property type="entry name" value="MutL_C"/>
    <property type="match status" value="1"/>
</dbReference>
<dbReference type="SUPFAM" id="SSF55874">
    <property type="entry name" value="ATPase domain of HSP90 chaperone/DNA topoisomerase II/histidine kinase"/>
    <property type="match status" value="1"/>
</dbReference>
<dbReference type="SUPFAM" id="SSF118116">
    <property type="entry name" value="DNA mismatch repair protein MutL"/>
    <property type="match status" value="1"/>
</dbReference>
<dbReference type="SUPFAM" id="SSF54211">
    <property type="entry name" value="Ribosomal protein S5 domain 2-like"/>
    <property type="match status" value="1"/>
</dbReference>
<dbReference type="PROSITE" id="PS00058">
    <property type="entry name" value="DNA_MISMATCH_REPAIR_1"/>
    <property type="match status" value="1"/>
</dbReference>
<protein>
    <recommendedName>
        <fullName evidence="1">DNA mismatch repair protein MutL</fullName>
    </recommendedName>
</protein>
<keyword id="KW-0227">DNA damage</keyword>
<keyword id="KW-0234">DNA repair</keyword>
<comment type="function">
    <text evidence="1">This protein is involved in the repair of mismatches in DNA. It is required for dam-dependent methyl-directed DNA mismatch repair. May act as a 'molecular matchmaker', a protein that promotes the formation of a stable complex between two or more DNA-binding proteins in an ATP-dependent manner without itself being part of a final effector complex.</text>
</comment>
<comment type="similarity">
    <text evidence="1">Belongs to the DNA mismatch repair MutL/HexB family.</text>
</comment>
<name>MUTL_CHLCV</name>
<gene>
    <name evidence="1" type="primary">mutL</name>
    <name type="ordered locus">CCA_00951</name>
</gene>
<evidence type="ECO:0000255" key="1">
    <source>
        <dbReference type="HAMAP-Rule" id="MF_00149"/>
    </source>
</evidence>
<feature type="chain" id="PRO_0000177935" description="DNA mismatch repair protein MutL">
    <location>
        <begin position="1"/>
        <end position="580"/>
    </location>
</feature>
<reference key="1">
    <citation type="journal article" date="2003" name="Nucleic Acids Res.">
        <title>Genome sequence of Chlamydophila caviae (Chlamydia psittaci GPIC): examining the role of niche-specific genes in the evolution of the Chlamydiaceae.</title>
        <authorList>
            <person name="Read T.D."/>
            <person name="Myers G.S.A."/>
            <person name="Brunham R.C."/>
            <person name="Nelson W.C."/>
            <person name="Paulsen I.T."/>
            <person name="Heidelberg J.F."/>
            <person name="Holtzapple E.K."/>
            <person name="Khouri H.M."/>
            <person name="Federova N.B."/>
            <person name="Carty H.A."/>
            <person name="Umayam L.A."/>
            <person name="Haft D.H."/>
            <person name="Peterson J.D."/>
            <person name="Beanan M.J."/>
            <person name="White O."/>
            <person name="Salzberg S.L."/>
            <person name="Hsia R.-C."/>
            <person name="McClarty G."/>
            <person name="Rank R.G."/>
            <person name="Bavoil P.M."/>
            <person name="Fraser C.M."/>
        </authorList>
    </citation>
    <scope>NUCLEOTIDE SEQUENCE [LARGE SCALE GENOMIC DNA]</scope>
    <source>
        <strain>ATCC VR-813 / DSM 19441 / 03DC25 / GPIC</strain>
    </source>
</reference>